<accession>B2VBD5</accession>
<organism>
    <name type="scientific">Erwinia tasmaniensis (strain DSM 17950 / CFBP 7177 / CIP 109463 / NCPPB 4357 / Et1/99)</name>
    <dbReference type="NCBI Taxonomy" id="465817"/>
    <lineage>
        <taxon>Bacteria</taxon>
        <taxon>Pseudomonadati</taxon>
        <taxon>Pseudomonadota</taxon>
        <taxon>Gammaproteobacteria</taxon>
        <taxon>Enterobacterales</taxon>
        <taxon>Erwiniaceae</taxon>
        <taxon>Erwinia</taxon>
    </lineage>
</organism>
<reference key="1">
    <citation type="journal article" date="2008" name="Environ. Microbiol.">
        <title>The genome of Erwinia tasmaniensis strain Et1/99, a non-pathogenic bacterium in the genus Erwinia.</title>
        <authorList>
            <person name="Kube M."/>
            <person name="Migdoll A.M."/>
            <person name="Mueller I."/>
            <person name="Kuhl H."/>
            <person name="Beck A."/>
            <person name="Reinhardt R."/>
            <person name="Geider K."/>
        </authorList>
    </citation>
    <scope>NUCLEOTIDE SEQUENCE [LARGE SCALE GENOMIC DNA]</scope>
    <source>
        <strain>DSM 17950 / CFBP 7177 / CIP 109463 / NCPPB 4357 / Et1/99</strain>
    </source>
</reference>
<dbReference type="EC" id="6.1.1.16" evidence="1"/>
<dbReference type="EMBL" id="CU468135">
    <property type="protein sequence ID" value="CAO97484.1"/>
    <property type="molecule type" value="Genomic_DNA"/>
</dbReference>
<dbReference type="RefSeq" id="WP_012442151.1">
    <property type="nucleotide sequence ID" value="NC_010694.1"/>
</dbReference>
<dbReference type="SMR" id="B2VBD5"/>
<dbReference type="STRING" id="465817.ETA_24380"/>
<dbReference type="KEGG" id="eta:ETA_24380"/>
<dbReference type="eggNOG" id="COG0215">
    <property type="taxonomic scope" value="Bacteria"/>
</dbReference>
<dbReference type="HOGENOM" id="CLU_013528_0_1_6"/>
<dbReference type="OrthoDB" id="9815130at2"/>
<dbReference type="Proteomes" id="UP000001726">
    <property type="component" value="Chromosome"/>
</dbReference>
<dbReference type="GO" id="GO:0005829">
    <property type="term" value="C:cytosol"/>
    <property type="evidence" value="ECO:0007669"/>
    <property type="project" value="TreeGrafter"/>
</dbReference>
<dbReference type="GO" id="GO:0005524">
    <property type="term" value="F:ATP binding"/>
    <property type="evidence" value="ECO:0007669"/>
    <property type="project" value="UniProtKB-UniRule"/>
</dbReference>
<dbReference type="GO" id="GO:0004817">
    <property type="term" value="F:cysteine-tRNA ligase activity"/>
    <property type="evidence" value="ECO:0007669"/>
    <property type="project" value="UniProtKB-UniRule"/>
</dbReference>
<dbReference type="GO" id="GO:0008270">
    <property type="term" value="F:zinc ion binding"/>
    <property type="evidence" value="ECO:0007669"/>
    <property type="project" value="UniProtKB-UniRule"/>
</dbReference>
<dbReference type="GO" id="GO:0006423">
    <property type="term" value="P:cysteinyl-tRNA aminoacylation"/>
    <property type="evidence" value="ECO:0007669"/>
    <property type="project" value="UniProtKB-UniRule"/>
</dbReference>
<dbReference type="CDD" id="cd07963">
    <property type="entry name" value="Anticodon_Ia_Cys"/>
    <property type="match status" value="1"/>
</dbReference>
<dbReference type="CDD" id="cd00672">
    <property type="entry name" value="CysRS_core"/>
    <property type="match status" value="1"/>
</dbReference>
<dbReference type="FunFam" id="1.20.120.1910:FF:000001">
    <property type="entry name" value="Cysteine--tRNA ligase"/>
    <property type="match status" value="1"/>
</dbReference>
<dbReference type="FunFam" id="3.40.50.620:FF:000009">
    <property type="entry name" value="Cysteine--tRNA ligase"/>
    <property type="match status" value="1"/>
</dbReference>
<dbReference type="Gene3D" id="1.20.120.1910">
    <property type="entry name" value="Cysteine-tRNA ligase, C-terminal anti-codon recognition domain"/>
    <property type="match status" value="1"/>
</dbReference>
<dbReference type="Gene3D" id="3.40.50.620">
    <property type="entry name" value="HUPs"/>
    <property type="match status" value="1"/>
</dbReference>
<dbReference type="HAMAP" id="MF_00041">
    <property type="entry name" value="Cys_tRNA_synth"/>
    <property type="match status" value="1"/>
</dbReference>
<dbReference type="InterPro" id="IPR015803">
    <property type="entry name" value="Cys-tRNA-ligase"/>
</dbReference>
<dbReference type="InterPro" id="IPR015273">
    <property type="entry name" value="Cys-tRNA-synt_Ia_DALR"/>
</dbReference>
<dbReference type="InterPro" id="IPR024909">
    <property type="entry name" value="Cys-tRNA/MSH_ligase"/>
</dbReference>
<dbReference type="InterPro" id="IPR056411">
    <property type="entry name" value="CysS_C"/>
</dbReference>
<dbReference type="InterPro" id="IPR014729">
    <property type="entry name" value="Rossmann-like_a/b/a_fold"/>
</dbReference>
<dbReference type="InterPro" id="IPR032678">
    <property type="entry name" value="tRNA-synt_1_cat_dom"/>
</dbReference>
<dbReference type="InterPro" id="IPR009080">
    <property type="entry name" value="tRNAsynth_Ia_anticodon-bd"/>
</dbReference>
<dbReference type="NCBIfam" id="TIGR00435">
    <property type="entry name" value="cysS"/>
    <property type="match status" value="1"/>
</dbReference>
<dbReference type="PANTHER" id="PTHR10890:SF3">
    <property type="entry name" value="CYSTEINE--TRNA LIGASE, CYTOPLASMIC"/>
    <property type="match status" value="1"/>
</dbReference>
<dbReference type="PANTHER" id="PTHR10890">
    <property type="entry name" value="CYSTEINYL-TRNA SYNTHETASE"/>
    <property type="match status" value="1"/>
</dbReference>
<dbReference type="Pfam" id="PF23493">
    <property type="entry name" value="CysS_C"/>
    <property type="match status" value="1"/>
</dbReference>
<dbReference type="Pfam" id="PF09190">
    <property type="entry name" value="DALR_2"/>
    <property type="match status" value="1"/>
</dbReference>
<dbReference type="Pfam" id="PF01406">
    <property type="entry name" value="tRNA-synt_1e"/>
    <property type="match status" value="1"/>
</dbReference>
<dbReference type="PRINTS" id="PR00983">
    <property type="entry name" value="TRNASYNTHCYS"/>
</dbReference>
<dbReference type="SMART" id="SM00840">
    <property type="entry name" value="DALR_2"/>
    <property type="match status" value="1"/>
</dbReference>
<dbReference type="SUPFAM" id="SSF47323">
    <property type="entry name" value="Anticodon-binding domain of a subclass of class I aminoacyl-tRNA synthetases"/>
    <property type="match status" value="1"/>
</dbReference>
<dbReference type="SUPFAM" id="SSF52374">
    <property type="entry name" value="Nucleotidylyl transferase"/>
    <property type="match status" value="1"/>
</dbReference>
<keyword id="KW-0030">Aminoacyl-tRNA synthetase</keyword>
<keyword id="KW-0067">ATP-binding</keyword>
<keyword id="KW-0963">Cytoplasm</keyword>
<keyword id="KW-0436">Ligase</keyword>
<keyword id="KW-0479">Metal-binding</keyword>
<keyword id="KW-0547">Nucleotide-binding</keyword>
<keyword id="KW-0648">Protein biosynthesis</keyword>
<keyword id="KW-1185">Reference proteome</keyword>
<keyword id="KW-0862">Zinc</keyword>
<feature type="chain" id="PRO_1000090836" description="Cysteine--tRNA ligase">
    <location>
        <begin position="1"/>
        <end position="462"/>
    </location>
</feature>
<feature type="short sequence motif" description="'HIGH' region">
    <location>
        <begin position="30"/>
        <end position="40"/>
    </location>
</feature>
<feature type="short sequence motif" description="'KMSKS' region">
    <location>
        <begin position="267"/>
        <end position="271"/>
    </location>
</feature>
<feature type="binding site" evidence="1">
    <location>
        <position position="28"/>
    </location>
    <ligand>
        <name>Zn(2+)</name>
        <dbReference type="ChEBI" id="CHEBI:29105"/>
    </ligand>
</feature>
<feature type="binding site" evidence="1">
    <location>
        <position position="210"/>
    </location>
    <ligand>
        <name>Zn(2+)</name>
        <dbReference type="ChEBI" id="CHEBI:29105"/>
    </ligand>
</feature>
<feature type="binding site" evidence="1">
    <location>
        <position position="235"/>
    </location>
    <ligand>
        <name>Zn(2+)</name>
        <dbReference type="ChEBI" id="CHEBI:29105"/>
    </ligand>
</feature>
<feature type="binding site" evidence="1">
    <location>
        <position position="239"/>
    </location>
    <ligand>
        <name>Zn(2+)</name>
        <dbReference type="ChEBI" id="CHEBI:29105"/>
    </ligand>
</feature>
<feature type="binding site" evidence="1">
    <location>
        <position position="270"/>
    </location>
    <ligand>
        <name>ATP</name>
        <dbReference type="ChEBI" id="CHEBI:30616"/>
    </ligand>
</feature>
<protein>
    <recommendedName>
        <fullName evidence="1">Cysteine--tRNA ligase</fullName>
        <ecNumber evidence="1">6.1.1.16</ecNumber>
    </recommendedName>
    <alternativeName>
        <fullName evidence="1">Cysteinyl-tRNA synthetase</fullName>
        <shortName evidence="1">CysRS</shortName>
    </alternativeName>
</protein>
<proteinExistence type="inferred from homology"/>
<comment type="catalytic activity">
    <reaction evidence="1">
        <text>tRNA(Cys) + L-cysteine + ATP = L-cysteinyl-tRNA(Cys) + AMP + diphosphate</text>
        <dbReference type="Rhea" id="RHEA:17773"/>
        <dbReference type="Rhea" id="RHEA-COMP:9661"/>
        <dbReference type="Rhea" id="RHEA-COMP:9679"/>
        <dbReference type="ChEBI" id="CHEBI:30616"/>
        <dbReference type="ChEBI" id="CHEBI:33019"/>
        <dbReference type="ChEBI" id="CHEBI:35235"/>
        <dbReference type="ChEBI" id="CHEBI:78442"/>
        <dbReference type="ChEBI" id="CHEBI:78517"/>
        <dbReference type="ChEBI" id="CHEBI:456215"/>
        <dbReference type="EC" id="6.1.1.16"/>
    </reaction>
</comment>
<comment type="cofactor">
    <cofactor evidence="1">
        <name>Zn(2+)</name>
        <dbReference type="ChEBI" id="CHEBI:29105"/>
    </cofactor>
    <text evidence="1">Binds 1 zinc ion per subunit.</text>
</comment>
<comment type="subunit">
    <text evidence="1">Monomer.</text>
</comment>
<comment type="subcellular location">
    <subcellularLocation>
        <location evidence="1">Cytoplasm</location>
    </subcellularLocation>
</comment>
<comment type="similarity">
    <text evidence="1">Belongs to the class-I aminoacyl-tRNA synthetase family.</text>
</comment>
<gene>
    <name evidence="1" type="primary">cysS</name>
    <name type="ordered locus">ETA_24380</name>
</gene>
<sequence length="462" mass="52304">MLKIYNTLSRQKEEFKPIHAGKIGMYVCGITVYDLCHIGHGRTFAAFDVVARYLRYSGYQLKYVRNITDIDDKIIKRAQENGESIEQLTNRMIGEMHKDFAALNILPPDLEPRATRHITEIVELVEKLIAREHAYVASNGDVMFSVDSDPQYGSLSRQDLDQLQAGARVEVAADVKRNPMDFVLWKMSKADEPGWASPWGNGRPGWHIECSAMNCKQLGEHFDIHGGGSDLMFPHHENEIAQSTCAHDGPYVNYWMHSGMVMIDREKMSKSLNNFFTVRDVLEHYDAETVRYFLMSGHYRSQLNYGEDNLNQARSALERLYIALRNTDTGATPAGGEEFETRFREAMDDDFNTPEAYSALFDLAREVNRMKAEAPAAADGLAARLRVLGGVLGLLEQDPEQFLQSGANSNDEEVAQIEALIQMRIDARNEKNWAQADVARDRLNEMGIVLEDGAGGTRWRRK</sequence>
<evidence type="ECO:0000255" key="1">
    <source>
        <dbReference type="HAMAP-Rule" id="MF_00041"/>
    </source>
</evidence>
<name>SYC_ERWT9</name>